<feature type="chain" id="PRO_0000114050" description="Glutamyl-tRNA reductase">
    <location>
        <begin position="1"/>
        <end position="437"/>
    </location>
</feature>
<feature type="active site" description="Nucleophile" evidence="1">
    <location>
        <position position="50"/>
    </location>
</feature>
<feature type="binding site" evidence="1">
    <location>
        <begin position="49"/>
        <end position="52"/>
    </location>
    <ligand>
        <name>substrate</name>
    </ligand>
</feature>
<feature type="binding site" evidence="1">
    <location>
        <position position="109"/>
    </location>
    <ligand>
        <name>substrate</name>
    </ligand>
</feature>
<feature type="binding site" evidence="1">
    <location>
        <begin position="114"/>
        <end position="116"/>
    </location>
    <ligand>
        <name>substrate</name>
    </ligand>
</feature>
<feature type="binding site" evidence="1">
    <location>
        <position position="120"/>
    </location>
    <ligand>
        <name>substrate</name>
    </ligand>
</feature>
<feature type="binding site" evidence="1">
    <location>
        <begin position="189"/>
        <end position="194"/>
    </location>
    <ligand>
        <name>NADP(+)</name>
        <dbReference type="ChEBI" id="CHEBI:58349"/>
    </ligand>
</feature>
<feature type="site" description="Important for activity" evidence="1">
    <location>
        <position position="99"/>
    </location>
</feature>
<dbReference type="EC" id="1.2.1.70" evidence="1"/>
<dbReference type="EMBL" id="AF064061">
    <property type="protein sequence ID" value="AAC18585.1"/>
    <property type="molecule type" value="Genomic_DNA"/>
</dbReference>
<dbReference type="SMR" id="O69108"/>
<dbReference type="STRING" id="44252.DJ90_5781"/>
<dbReference type="UniPathway" id="UPA00251">
    <property type="reaction ID" value="UER00316"/>
</dbReference>
<dbReference type="GO" id="GO:0008883">
    <property type="term" value="F:glutamyl-tRNA reductase activity"/>
    <property type="evidence" value="ECO:0007669"/>
    <property type="project" value="UniProtKB-UniRule"/>
</dbReference>
<dbReference type="GO" id="GO:0050661">
    <property type="term" value="F:NADP binding"/>
    <property type="evidence" value="ECO:0007669"/>
    <property type="project" value="InterPro"/>
</dbReference>
<dbReference type="GO" id="GO:0019353">
    <property type="term" value="P:protoporphyrinogen IX biosynthetic process from glutamate"/>
    <property type="evidence" value="ECO:0007669"/>
    <property type="project" value="TreeGrafter"/>
</dbReference>
<dbReference type="CDD" id="cd05213">
    <property type="entry name" value="NAD_bind_Glutamyl_tRNA_reduct"/>
    <property type="match status" value="1"/>
</dbReference>
<dbReference type="FunFam" id="3.30.460.30:FF:000001">
    <property type="entry name" value="Glutamyl-tRNA reductase"/>
    <property type="match status" value="1"/>
</dbReference>
<dbReference type="FunFam" id="3.40.50.720:FF:000031">
    <property type="entry name" value="Glutamyl-tRNA reductase"/>
    <property type="match status" value="1"/>
</dbReference>
<dbReference type="Gene3D" id="3.30.460.30">
    <property type="entry name" value="Glutamyl-tRNA reductase, N-terminal domain"/>
    <property type="match status" value="1"/>
</dbReference>
<dbReference type="Gene3D" id="3.40.50.720">
    <property type="entry name" value="NAD(P)-binding Rossmann-like Domain"/>
    <property type="match status" value="1"/>
</dbReference>
<dbReference type="HAMAP" id="MF_00087">
    <property type="entry name" value="Glu_tRNA_reductase"/>
    <property type="match status" value="1"/>
</dbReference>
<dbReference type="InterPro" id="IPR000343">
    <property type="entry name" value="4pyrrol_synth_GluRdtase"/>
</dbReference>
<dbReference type="InterPro" id="IPR015896">
    <property type="entry name" value="4pyrrol_synth_GluRdtase_dimer"/>
</dbReference>
<dbReference type="InterPro" id="IPR015895">
    <property type="entry name" value="4pyrrol_synth_GluRdtase_N"/>
</dbReference>
<dbReference type="InterPro" id="IPR018214">
    <property type="entry name" value="GluRdtase_CS"/>
</dbReference>
<dbReference type="InterPro" id="IPR036453">
    <property type="entry name" value="GluRdtase_dimer_dom_sf"/>
</dbReference>
<dbReference type="InterPro" id="IPR036343">
    <property type="entry name" value="GluRdtase_N_sf"/>
</dbReference>
<dbReference type="InterPro" id="IPR036291">
    <property type="entry name" value="NAD(P)-bd_dom_sf"/>
</dbReference>
<dbReference type="InterPro" id="IPR006151">
    <property type="entry name" value="Shikm_DH/Glu-tRNA_Rdtase"/>
</dbReference>
<dbReference type="NCBIfam" id="TIGR01035">
    <property type="entry name" value="hemA"/>
    <property type="match status" value="1"/>
</dbReference>
<dbReference type="NCBIfam" id="NF000744">
    <property type="entry name" value="PRK00045.1-3"/>
    <property type="match status" value="1"/>
</dbReference>
<dbReference type="PANTHER" id="PTHR43013">
    <property type="entry name" value="GLUTAMYL-TRNA REDUCTASE"/>
    <property type="match status" value="1"/>
</dbReference>
<dbReference type="PANTHER" id="PTHR43013:SF1">
    <property type="entry name" value="GLUTAMYL-TRNA REDUCTASE"/>
    <property type="match status" value="1"/>
</dbReference>
<dbReference type="Pfam" id="PF00745">
    <property type="entry name" value="GlutR_dimer"/>
    <property type="match status" value="1"/>
</dbReference>
<dbReference type="Pfam" id="PF05201">
    <property type="entry name" value="GlutR_N"/>
    <property type="match status" value="1"/>
</dbReference>
<dbReference type="Pfam" id="PF01488">
    <property type="entry name" value="Shikimate_DH"/>
    <property type="match status" value="1"/>
</dbReference>
<dbReference type="PIRSF" id="PIRSF000445">
    <property type="entry name" value="4pyrrol_synth_GluRdtase"/>
    <property type="match status" value="1"/>
</dbReference>
<dbReference type="SUPFAM" id="SSF69742">
    <property type="entry name" value="Glutamyl tRNA-reductase catalytic, N-terminal domain"/>
    <property type="match status" value="1"/>
</dbReference>
<dbReference type="SUPFAM" id="SSF69075">
    <property type="entry name" value="Glutamyl tRNA-reductase dimerization domain"/>
    <property type="match status" value="1"/>
</dbReference>
<dbReference type="SUPFAM" id="SSF51735">
    <property type="entry name" value="NAD(P)-binding Rossmann-fold domains"/>
    <property type="match status" value="1"/>
</dbReference>
<dbReference type="PROSITE" id="PS00747">
    <property type="entry name" value="GLUTR"/>
    <property type="match status" value="1"/>
</dbReference>
<protein>
    <recommendedName>
        <fullName evidence="1">Glutamyl-tRNA reductase</fullName>
        <shortName evidence="1">GluTR</shortName>
        <ecNumber evidence="1">1.2.1.70</ecNumber>
    </recommendedName>
</protein>
<name>HEM1_PAEMA</name>
<proteinExistence type="inferred from homology"/>
<gene>
    <name evidence="1" type="primary">hemA</name>
</gene>
<reference key="1">
    <citation type="journal article" date="1999" name="Microbiology">
        <title>Organization of genes for tetrapyrrole biosynthesis in Gram-positive bacteria.</title>
        <authorList>
            <person name="Johansson P."/>
            <person name="Hederstedt L."/>
        </authorList>
    </citation>
    <scope>NUCLEOTIDE SEQUENCE [GENOMIC DNA]</scope>
    <source>
        <strain>ATCC 8244 / DSM 24 / IAM 1227 / JCM 2500 / NBRC 15307 / NCIMB 9368 / NCTC 6355 / NRRL B-394 / VKM B-506</strain>
    </source>
</reference>
<keyword id="KW-0521">NADP</keyword>
<keyword id="KW-0560">Oxidoreductase</keyword>
<keyword id="KW-0627">Porphyrin biosynthesis</keyword>
<accession>O69108</accession>
<evidence type="ECO:0000255" key="1">
    <source>
        <dbReference type="HAMAP-Rule" id="MF_00087"/>
    </source>
</evidence>
<comment type="function">
    <text evidence="1">Catalyzes the NADPH-dependent reduction of glutamyl-tRNA(Glu) to glutamate 1-semialdehyde (GSA).</text>
</comment>
<comment type="catalytic activity">
    <reaction evidence="1">
        <text>(S)-4-amino-5-oxopentanoate + tRNA(Glu) + NADP(+) = L-glutamyl-tRNA(Glu) + NADPH + H(+)</text>
        <dbReference type="Rhea" id="RHEA:12344"/>
        <dbReference type="Rhea" id="RHEA-COMP:9663"/>
        <dbReference type="Rhea" id="RHEA-COMP:9680"/>
        <dbReference type="ChEBI" id="CHEBI:15378"/>
        <dbReference type="ChEBI" id="CHEBI:57501"/>
        <dbReference type="ChEBI" id="CHEBI:57783"/>
        <dbReference type="ChEBI" id="CHEBI:58349"/>
        <dbReference type="ChEBI" id="CHEBI:78442"/>
        <dbReference type="ChEBI" id="CHEBI:78520"/>
        <dbReference type="EC" id="1.2.1.70"/>
    </reaction>
</comment>
<comment type="pathway">
    <text evidence="1">Porphyrin-containing compound metabolism; protoporphyrin-IX biosynthesis; 5-aminolevulinate from L-glutamyl-tRNA(Glu): step 1/2.</text>
</comment>
<comment type="subunit">
    <text evidence="1">Homodimer.</text>
</comment>
<comment type="domain">
    <text evidence="1">Possesses an unusual extended V-shaped dimeric structure with each monomer consisting of three distinct domains arranged along a curved 'spinal' alpha-helix. The N-terminal catalytic domain specifically recognizes the glutamate moiety of the substrate. The second domain is the NADPH-binding domain, and the third C-terminal domain is responsible for dimerization.</text>
</comment>
<comment type="miscellaneous">
    <text evidence="1">During catalysis, the active site Cys acts as a nucleophile attacking the alpha-carbonyl group of tRNA-bound glutamate with the formation of a thioester intermediate between enzyme and glutamate, and the concomitant release of tRNA(Glu). The thioester intermediate is finally reduced by direct hydride transfer from NADPH, to form the product GSA.</text>
</comment>
<comment type="similarity">
    <text evidence="1">Belongs to the glutamyl-tRNA reductase family.</text>
</comment>
<organism>
    <name type="scientific">Paenibacillus macerans</name>
    <name type="common">Bacillus macerans</name>
    <dbReference type="NCBI Taxonomy" id="44252"/>
    <lineage>
        <taxon>Bacteria</taxon>
        <taxon>Bacillati</taxon>
        <taxon>Bacillota</taxon>
        <taxon>Bacilli</taxon>
        <taxon>Bacillales</taxon>
        <taxon>Paenibacillaceae</taxon>
        <taxon>Paenibacillus</taxon>
    </lineage>
</organism>
<sequence>MHIVVVGLNYRTAPVEVRERFSFAEKDMPQALQELLRTKSVLEGVIIATCNRTEIYVVVDRLHMCGYFIRSFMERWFGVPREEFTRHLYMYEDEQAVRHLFRVACGLDSMVLGETQILGQVKSAFLLSQRQKGTGTWFNMLFKQAVTLGKRAHSETAIGQSAVSISYAAVELGKRIFGSFSGKRVLILGAGKMSELTAKHLSGGGADEVIVANRTYARAQELAAKFDGTPCTMQEAMERLADVDILISSTGAEGIRDHVGQVERSMKRRPDRPLFMIDIAVPRDIEPEIGVLENVFLYDIDDLEGIVENNLEMRRAEAVKIDKMIEEEMQVFANWLQTLGVKPVIRALQEKAAHIHESTLDSMFNKLPELDERQRKVIRRLTKSILNQMMHDPINRIKEMAGGKQGAEALEMFTQIFALEKHLEAGAPVGRGKRRLP</sequence>